<protein>
    <recommendedName>
        <fullName evidence="2">DnaA regulatory inactivator Hda</fullName>
    </recommendedName>
</protein>
<reference key="1">
    <citation type="journal article" date="2006" name="Mol. Microbiol.">
        <title>Role of pathogenicity island-associated integrases in the genome plasticity of uropathogenic Escherichia coli strain 536.</title>
        <authorList>
            <person name="Hochhut B."/>
            <person name="Wilde C."/>
            <person name="Balling G."/>
            <person name="Middendorf B."/>
            <person name="Dobrindt U."/>
            <person name="Brzuszkiewicz E."/>
            <person name="Gottschalk G."/>
            <person name="Carniel E."/>
            <person name="Hacker J."/>
        </authorList>
    </citation>
    <scope>NUCLEOTIDE SEQUENCE [LARGE SCALE GENOMIC DNA]</scope>
    <source>
        <strain>536 / UPEC</strain>
    </source>
</reference>
<sequence length="233" mass="26633">MNTPAQLSLPLYLPDDETFASFWPGDNSSLLAALQNVLRQEHSGYIYLWAREGAGRSHLLHAACAELSQRGDAVGYVPLDKRTWFVPEVLDGMEHLSLVCIDNIECIAGDELWEMAIFDLYNRILESGKTRLLITGDRPPRQLNLGLPDLASRLDWGQIYKLQPLSDEDKLQALQLRARLRGFELPEDVGRFLLKRLDREMRTLFMTLDQLDRASITAQRKLTIPFVKEILKL</sequence>
<feature type="chain" id="PRO_1000065562" description="DnaA regulatory inactivator Hda">
    <location>
        <begin position="1"/>
        <end position="233"/>
    </location>
</feature>
<name>HDA_ECOL5</name>
<accession>Q0TEZ2</accession>
<dbReference type="EMBL" id="CP000247">
    <property type="protein sequence ID" value="ABG70487.1"/>
    <property type="status" value="ALT_INIT"/>
    <property type="molecule type" value="Genomic_DNA"/>
</dbReference>
<dbReference type="RefSeq" id="WP_001307333.1">
    <property type="nucleotide sequence ID" value="NC_008253.1"/>
</dbReference>
<dbReference type="SMR" id="Q0TEZ2"/>
<dbReference type="KEGG" id="ecp:ECP_2498"/>
<dbReference type="HOGENOM" id="CLU_072265_1_1_6"/>
<dbReference type="Proteomes" id="UP000009182">
    <property type="component" value="Chromosome"/>
</dbReference>
<dbReference type="GO" id="GO:0006270">
    <property type="term" value="P:DNA replication initiation"/>
    <property type="evidence" value="ECO:0007669"/>
    <property type="project" value="TreeGrafter"/>
</dbReference>
<dbReference type="GO" id="GO:0032297">
    <property type="term" value="P:negative regulation of DNA-templated DNA replication initiation"/>
    <property type="evidence" value="ECO:0007669"/>
    <property type="project" value="InterPro"/>
</dbReference>
<dbReference type="FunFam" id="1.10.8.60:FF:000024">
    <property type="entry name" value="DnaA regulatory inactivator Hda"/>
    <property type="match status" value="1"/>
</dbReference>
<dbReference type="FunFam" id="3.40.50.300:FF:000452">
    <property type="entry name" value="DnaA regulatory inactivator Hda"/>
    <property type="match status" value="1"/>
</dbReference>
<dbReference type="Gene3D" id="1.10.8.60">
    <property type="match status" value="1"/>
</dbReference>
<dbReference type="Gene3D" id="3.40.50.300">
    <property type="entry name" value="P-loop containing nucleotide triphosphate hydrolases"/>
    <property type="match status" value="1"/>
</dbReference>
<dbReference type="HAMAP" id="MF_01158">
    <property type="entry name" value="Hda"/>
    <property type="match status" value="1"/>
</dbReference>
<dbReference type="InterPro" id="IPR020591">
    <property type="entry name" value="Chromosome_initiator_DnaA-like"/>
</dbReference>
<dbReference type="InterPro" id="IPR013317">
    <property type="entry name" value="DnaA_dom"/>
</dbReference>
<dbReference type="InterPro" id="IPR017788">
    <property type="entry name" value="Hda"/>
</dbReference>
<dbReference type="InterPro" id="IPR022864">
    <property type="entry name" value="Hda_Enterobact"/>
</dbReference>
<dbReference type="InterPro" id="IPR055199">
    <property type="entry name" value="Hda_lid"/>
</dbReference>
<dbReference type="InterPro" id="IPR027417">
    <property type="entry name" value="P-loop_NTPase"/>
</dbReference>
<dbReference type="NCBIfam" id="TIGR03420">
    <property type="entry name" value="DnaA_homol_Hda"/>
    <property type="match status" value="1"/>
</dbReference>
<dbReference type="NCBIfam" id="NF005982">
    <property type="entry name" value="PRK08084.1"/>
    <property type="match status" value="1"/>
</dbReference>
<dbReference type="PANTHER" id="PTHR30050">
    <property type="entry name" value="CHROMOSOMAL REPLICATION INITIATOR PROTEIN DNAA"/>
    <property type="match status" value="1"/>
</dbReference>
<dbReference type="PANTHER" id="PTHR30050:SF5">
    <property type="entry name" value="DNAA REGULATORY INACTIVATOR HDA"/>
    <property type="match status" value="1"/>
</dbReference>
<dbReference type="Pfam" id="PF00308">
    <property type="entry name" value="Bac_DnaA"/>
    <property type="match status" value="1"/>
</dbReference>
<dbReference type="Pfam" id="PF22688">
    <property type="entry name" value="Hda_lid"/>
    <property type="match status" value="1"/>
</dbReference>
<dbReference type="PRINTS" id="PR00051">
    <property type="entry name" value="DNAA"/>
</dbReference>
<dbReference type="SUPFAM" id="SSF52540">
    <property type="entry name" value="P-loop containing nucleoside triphosphate hydrolases"/>
    <property type="match status" value="1"/>
</dbReference>
<gene>
    <name evidence="2" type="primary">hda</name>
    <name type="ordered locus">ECP_2498</name>
</gene>
<keyword id="KW-0235">DNA replication</keyword>
<keyword id="KW-0236">DNA replication inhibitor</keyword>
<evidence type="ECO:0000250" key="1"/>
<evidence type="ECO:0000255" key="2">
    <source>
        <dbReference type="HAMAP-Rule" id="MF_01158"/>
    </source>
</evidence>
<evidence type="ECO:0000305" key="3"/>
<comment type="function">
    <text evidence="1">Mediates the interaction of DNA replication initiator protein DnaA with DNA polymerase subunit beta sliding clamp (dnaN). Stimulates hydrolysis of ATP-DnaA to ADP-DnaA, rendering DnaA inactive for reinitiation, a process called regulatory inhibition of DnaA or RIDA (By similarity).</text>
</comment>
<comment type="subunit">
    <text evidence="2">The active form seems to be an ADP-bound monomer. Forms the RIDA complex (regulatory inactivation of DnaA) of ATP-DnaA, ADP-Hda and the DNA-loaded beta sliding clamp (dnaN).</text>
</comment>
<comment type="similarity">
    <text evidence="2">Belongs to the DnaA family. HdA subfamily.</text>
</comment>
<comment type="sequence caution" evidence="3">
    <conflict type="erroneous initiation">
        <sequence resource="EMBL-CDS" id="ABG70487"/>
    </conflict>
</comment>
<proteinExistence type="inferred from homology"/>
<organism>
    <name type="scientific">Escherichia coli O6:K15:H31 (strain 536 / UPEC)</name>
    <dbReference type="NCBI Taxonomy" id="362663"/>
    <lineage>
        <taxon>Bacteria</taxon>
        <taxon>Pseudomonadati</taxon>
        <taxon>Pseudomonadota</taxon>
        <taxon>Gammaproteobacteria</taxon>
        <taxon>Enterobacterales</taxon>
        <taxon>Enterobacteriaceae</taxon>
        <taxon>Escherichia</taxon>
    </lineage>
</organism>